<name>ZN799_HUMAN</name>
<accession>Q96GE5</accession>
<sequence length="643" mass="74288">MASVALEDVAVNFTREEWALLGPCQKNLYKDVMQETIRNLDCVGMKWKDQNIEDQYRYPRKNLRCRMLERFVESKDGTQCGETSSQIQDSIVTKNTLPGVGPYESRMSGEVIMGHSSLNCYIRVGAGHKPYEYHECGEKPDTHKQRGKAFSYHNSLQTHERLHTGKKPYNCKECGKSFSSLGNLQRHMAVQRGDGPYKCKLCGKAFFWPSLLHMHERTHTGEKPYECKQCSKAFSFYSSYLRHERTHTGEKLYECKQCSKAFPDYSSCLRHERTHTGKKPYTCKQCGKAFSASTSLRRHETTHTDEKPYACQQCGKAFHHLGSFQRHMVMHTRDGPHKCKICGKGFDCPSSLKSHERTHTGEKLYECKQCGKALSHSSSFRRHMTMHTGDGPHKCKICGKAFVYPSVFQRHEKTHTAEKPYKCKQCGKAYRISSSLRRHETTHTGEKPYKCKCGKAFIDFYSFQNHKTTHAGEKPYECKECGKAFSCFQYLSQHRRTHTGEKPYECNTCKKAFSHFGNLKVHERIHSGEKPYECKECGKAFSWLTCFLRHERIHMREKPYECQQCGKAFTHSRFLQGHEKTHTGENPYECKECGKAFASLSSLHRHKKTHWKKTHTGENPYGCKECGKAFASLSSLHRHKKTH</sequence>
<organism>
    <name type="scientific">Homo sapiens</name>
    <name type="common">Human</name>
    <dbReference type="NCBI Taxonomy" id="9606"/>
    <lineage>
        <taxon>Eukaryota</taxon>
        <taxon>Metazoa</taxon>
        <taxon>Chordata</taxon>
        <taxon>Craniata</taxon>
        <taxon>Vertebrata</taxon>
        <taxon>Euteleostomi</taxon>
        <taxon>Mammalia</taxon>
        <taxon>Eutheria</taxon>
        <taxon>Euarchontoglires</taxon>
        <taxon>Primates</taxon>
        <taxon>Haplorrhini</taxon>
        <taxon>Catarrhini</taxon>
        <taxon>Hominidae</taxon>
        <taxon>Homo</taxon>
    </lineage>
</organism>
<evidence type="ECO:0000255" key="1">
    <source>
        <dbReference type="PROSITE-ProRule" id="PRU00042"/>
    </source>
</evidence>
<evidence type="ECO:0000255" key="2">
    <source>
        <dbReference type="PROSITE-ProRule" id="PRU00119"/>
    </source>
</evidence>
<evidence type="ECO:0000303" key="3">
    <source>
    </source>
</evidence>
<evidence type="ECO:0000305" key="4"/>
<proteinExistence type="evidence at protein level"/>
<keyword id="KW-0025">Alternative splicing</keyword>
<keyword id="KW-0238">DNA-binding</keyword>
<keyword id="KW-0479">Metal-binding</keyword>
<keyword id="KW-0539">Nucleus</keyword>
<keyword id="KW-1267">Proteomics identification</keyword>
<keyword id="KW-1185">Reference proteome</keyword>
<keyword id="KW-0677">Repeat</keyword>
<keyword id="KW-0804">Transcription</keyword>
<keyword id="KW-0805">Transcription regulation</keyword>
<keyword id="KW-0862">Zinc</keyword>
<keyword id="KW-0863">Zinc-finger</keyword>
<dbReference type="EMBL" id="AL832890">
    <property type="status" value="NOT_ANNOTATED_CDS"/>
    <property type="molecule type" value="mRNA"/>
</dbReference>
<dbReference type="EMBL" id="AC008758">
    <property type="status" value="NOT_ANNOTATED_CDS"/>
    <property type="molecule type" value="Genomic_DNA"/>
</dbReference>
<dbReference type="EMBL" id="BC009517">
    <property type="protein sequence ID" value="AAH09517.1"/>
    <property type="molecule type" value="mRNA"/>
</dbReference>
<dbReference type="CCDS" id="CCDS45989.1">
    <molecule id="Q96GE5-1"/>
</dbReference>
<dbReference type="RefSeq" id="NP_001074290.1">
    <molecule id="Q96GE5-1"/>
    <property type="nucleotide sequence ID" value="NM_001080821.3"/>
</dbReference>
<dbReference type="RefSeq" id="XP_047295605.1">
    <molecule id="Q96GE5-1"/>
    <property type="nucleotide sequence ID" value="XM_047439649.1"/>
</dbReference>
<dbReference type="SMR" id="Q96GE5"/>
<dbReference type="BioGRID" id="124735">
    <property type="interactions" value="2"/>
</dbReference>
<dbReference type="FunCoup" id="Q96GE5">
    <property type="interactions" value="586"/>
</dbReference>
<dbReference type="IntAct" id="Q96GE5">
    <property type="interactions" value="4"/>
</dbReference>
<dbReference type="STRING" id="9606.ENSP00000411084"/>
<dbReference type="iPTMnet" id="Q96GE5"/>
<dbReference type="PhosphoSitePlus" id="Q96GE5"/>
<dbReference type="BioMuta" id="ZNF799"/>
<dbReference type="DMDM" id="296453084"/>
<dbReference type="jPOST" id="Q96GE5"/>
<dbReference type="MassIVE" id="Q96GE5"/>
<dbReference type="PaxDb" id="9606-ENSP00000411084"/>
<dbReference type="PeptideAtlas" id="Q96GE5"/>
<dbReference type="ProteomicsDB" id="76625">
    <molecule id="Q96GE5-1"/>
</dbReference>
<dbReference type="ProteomicsDB" id="76626">
    <molecule id="Q96GE5-2"/>
</dbReference>
<dbReference type="Pumba" id="Q96GE5"/>
<dbReference type="Antibodypedia" id="35105">
    <property type="antibodies" value="38 antibodies from 10 providers"/>
</dbReference>
<dbReference type="DNASU" id="90576"/>
<dbReference type="Ensembl" id="ENST00000430385.3">
    <molecule id="Q96GE5-1"/>
    <property type="protein sequence ID" value="ENSP00000411084.2"/>
    <property type="gene ID" value="ENSG00000196466.10"/>
</dbReference>
<dbReference type="GeneID" id="90576"/>
<dbReference type="KEGG" id="hsa:90576"/>
<dbReference type="MANE-Select" id="ENST00000430385.3">
    <property type="protein sequence ID" value="ENSP00000411084.2"/>
    <property type="RefSeq nucleotide sequence ID" value="NM_001080821.3"/>
    <property type="RefSeq protein sequence ID" value="NP_001074290.1"/>
</dbReference>
<dbReference type="UCSC" id="uc010dyt.4">
    <molecule id="Q96GE5-1"/>
    <property type="organism name" value="human"/>
</dbReference>
<dbReference type="AGR" id="HGNC:28071"/>
<dbReference type="CTD" id="90576"/>
<dbReference type="DisGeNET" id="90576"/>
<dbReference type="GeneCards" id="ZNF799"/>
<dbReference type="HGNC" id="HGNC:28071">
    <property type="gene designation" value="ZNF799"/>
</dbReference>
<dbReference type="HPA" id="ENSG00000196466">
    <property type="expression patterns" value="Low tissue specificity"/>
</dbReference>
<dbReference type="MIM" id="619916">
    <property type="type" value="gene"/>
</dbReference>
<dbReference type="neXtProt" id="NX_Q96GE5"/>
<dbReference type="OpenTargets" id="ENSG00000196466"/>
<dbReference type="PharmGKB" id="PA162410569"/>
<dbReference type="VEuPathDB" id="HostDB:ENSG00000196466"/>
<dbReference type="eggNOG" id="KOG1721">
    <property type="taxonomic scope" value="Eukaryota"/>
</dbReference>
<dbReference type="GeneTree" id="ENSGT00950000182755"/>
<dbReference type="HOGENOM" id="CLU_002678_44_5_1"/>
<dbReference type="InParanoid" id="Q96GE5"/>
<dbReference type="OMA" id="CESSMCE"/>
<dbReference type="OrthoDB" id="8922241at2759"/>
<dbReference type="PAN-GO" id="Q96GE5">
    <property type="GO annotations" value="4 GO annotations based on evolutionary models"/>
</dbReference>
<dbReference type="PhylomeDB" id="Q96GE5"/>
<dbReference type="TreeFam" id="TF338854"/>
<dbReference type="PathwayCommons" id="Q96GE5"/>
<dbReference type="Reactome" id="R-HSA-212436">
    <property type="pathway name" value="Generic Transcription Pathway"/>
</dbReference>
<dbReference type="SignaLink" id="Q96GE5"/>
<dbReference type="BioGRID-ORCS" id="90576">
    <property type="hits" value="8 hits in 1081 CRISPR screens"/>
</dbReference>
<dbReference type="ChiTaRS" id="ZNF799">
    <property type="organism name" value="human"/>
</dbReference>
<dbReference type="GenomeRNAi" id="90576"/>
<dbReference type="Pharos" id="Q96GE5">
    <property type="development level" value="Tdark"/>
</dbReference>
<dbReference type="PRO" id="PR:Q96GE5"/>
<dbReference type="Proteomes" id="UP000005640">
    <property type="component" value="Chromosome 19"/>
</dbReference>
<dbReference type="RNAct" id="Q96GE5">
    <property type="molecule type" value="protein"/>
</dbReference>
<dbReference type="Bgee" id="ENSG00000196466">
    <property type="expression patterns" value="Expressed in male germ line stem cell (sensu Vertebrata) in testis and 99 other cell types or tissues"/>
</dbReference>
<dbReference type="ExpressionAtlas" id="Q96GE5">
    <property type="expression patterns" value="baseline and differential"/>
</dbReference>
<dbReference type="GO" id="GO:0005634">
    <property type="term" value="C:nucleus"/>
    <property type="evidence" value="ECO:0000318"/>
    <property type="project" value="GO_Central"/>
</dbReference>
<dbReference type="GO" id="GO:0000981">
    <property type="term" value="F:DNA-binding transcription factor activity, RNA polymerase II-specific"/>
    <property type="evidence" value="ECO:0000318"/>
    <property type="project" value="GO_Central"/>
</dbReference>
<dbReference type="GO" id="GO:0000977">
    <property type="term" value="F:RNA polymerase II transcription regulatory region sequence-specific DNA binding"/>
    <property type="evidence" value="ECO:0000318"/>
    <property type="project" value="GO_Central"/>
</dbReference>
<dbReference type="GO" id="GO:0008270">
    <property type="term" value="F:zinc ion binding"/>
    <property type="evidence" value="ECO:0007669"/>
    <property type="project" value="UniProtKB-KW"/>
</dbReference>
<dbReference type="GO" id="GO:0006357">
    <property type="term" value="P:regulation of transcription by RNA polymerase II"/>
    <property type="evidence" value="ECO:0000318"/>
    <property type="project" value="GO_Central"/>
</dbReference>
<dbReference type="CDD" id="cd07765">
    <property type="entry name" value="KRAB_A-box"/>
    <property type="match status" value="1"/>
</dbReference>
<dbReference type="FunFam" id="3.30.160.60:FF:003733">
    <property type="match status" value="1"/>
</dbReference>
<dbReference type="FunFam" id="3.30.160.60:FF:000838">
    <property type="entry name" value="Zinc finger protein 14"/>
    <property type="match status" value="3"/>
</dbReference>
<dbReference type="FunFam" id="3.30.160.60:FF:000193">
    <property type="entry name" value="Zinc finger protein 300"/>
    <property type="match status" value="2"/>
</dbReference>
<dbReference type="FunFam" id="3.30.160.60:FF:000690">
    <property type="entry name" value="Zinc finger protein 354C"/>
    <property type="match status" value="1"/>
</dbReference>
<dbReference type="FunFam" id="3.30.160.60:FF:000338">
    <property type="entry name" value="zinc finger protein 383"/>
    <property type="match status" value="1"/>
</dbReference>
<dbReference type="FunFam" id="3.30.160.60:FF:001433">
    <property type="entry name" value="Zinc finger protein 44"/>
    <property type="match status" value="1"/>
</dbReference>
<dbReference type="FunFam" id="3.30.160.60:FF:003123">
    <property type="entry name" value="Zinc finger protein 443"/>
    <property type="match status" value="1"/>
</dbReference>
<dbReference type="FunFam" id="3.30.160.60:FF:001432">
    <property type="entry name" value="Zinc finger protein 571"/>
    <property type="match status" value="1"/>
</dbReference>
<dbReference type="FunFam" id="3.30.160.60:FF:000350">
    <property type="entry name" value="Zinc finger protein 699"/>
    <property type="match status" value="1"/>
</dbReference>
<dbReference type="FunFam" id="3.30.160.60:FF:000564">
    <property type="entry name" value="zinc finger protein 699"/>
    <property type="match status" value="1"/>
</dbReference>
<dbReference type="FunFam" id="3.30.160.60:FF:000710">
    <property type="entry name" value="Zinc finger protein 768"/>
    <property type="match status" value="1"/>
</dbReference>
<dbReference type="FunFam" id="3.30.160.60:FF:000493">
    <property type="entry name" value="Zinc finger protein 805"/>
    <property type="match status" value="1"/>
</dbReference>
<dbReference type="FunFam" id="3.30.160.60:FF:001459">
    <property type="entry name" value="Zinc finger protein 823"/>
    <property type="match status" value="1"/>
</dbReference>
<dbReference type="FunFam" id="3.30.160.60:FF:001933">
    <property type="entry name" value="Zinc finger protein 870"/>
    <property type="match status" value="1"/>
</dbReference>
<dbReference type="FunFam" id="3.30.160.60:FF:002179">
    <property type="entry name" value="Zinc finger protein 961"/>
    <property type="match status" value="1"/>
</dbReference>
<dbReference type="Gene3D" id="6.10.140.140">
    <property type="match status" value="1"/>
</dbReference>
<dbReference type="Gene3D" id="3.30.160.60">
    <property type="entry name" value="Classic Zinc Finger"/>
    <property type="match status" value="18"/>
</dbReference>
<dbReference type="InterPro" id="IPR001909">
    <property type="entry name" value="KRAB"/>
</dbReference>
<dbReference type="InterPro" id="IPR036051">
    <property type="entry name" value="KRAB_dom_sf"/>
</dbReference>
<dbReference type="InterPro" id="IPR036236">
    <property type="entry name" value="Znf_C2H2_sf"/>
</dbReference>
<dbReference type="InterPro" id="IPR013087">
    <property type="entry name" value="Znf_C2H2_type"/>
</dbReference>
<dbReference type="PANTHER" id="PTHR23226">
    <property type="entry name" value="ZINC FINGER AND SCAN DOMAIN-CONTAINING"/>
    <property type="match status" value="1"/>
</dbReference>
<dbReference type="PANTHER" id="PTHR23226:SF430">
    <property type="entry name" value="ZINC FINGER PROTEIN 709-LIKE"/>
    <property type="match status" value="1"/>
</dbReference>
<dbReference type="Pfam" id="PF01352">
    <property type="entry name" value="KRAB"/>
    <property type="match status" value="1"/>
</dbReference>
<dbReference type="Pfam" id="PF00096">
    <property type="entry name" value="zf-C2H2"/>
    <property type="match status" value="12"/>
</dbReference>
<dbReference type="Pfam" id="PF13912">
    <property type="entry name" value="zf-C2H2_6"/>
    <property type="match status" value="2"/>
</dbReference>
<dbReference type="SMART" id="SM00349">
    <property type="entry name" value="KRAB"/>
    <property type="match status" value="1"/>
</dbReference>
<dbReference type="SMART" id="SM00355">
    <property type="entry name" value="ZnF_C2H2"/>
    <property type="match status" value="18"/>
</dbReference>
<dbReference type="SUPFAM" id="SSF57667">
    <property type="entry name" value="beta-beta-alpha zinc fingers"/>
    <property type="match status" value="10"/>
</dbReference>
<dbReference type="SUPFAM" id="SSF109640">
    <property type="entry name" value="KRAB domain (Kruppel-associated box)"/>
    <property type="match status" value="1"/>
</dbReference>
<dbReference type="PROSITE" id="PS50805">
    <property type="entry name" value="KRAB"/>
    <property type="match status" value="1"/>
</dbReference>
<dbReference type="PROSITE" id="PS00028">
    <property type="entry name" value="ZINC_FINGER_C2H2_1"/>
    <property type="match status" value="15"/>
</dbReference>
<dbReference type="PROSITE" id="PS50157">
    <property type="entry name" value="ZINC_FINGER_C2H2_2"/>
    <property type="match status" value="18"/>
</dbReference>
<protein>
    <recommendedName>
        <fullName>Zinc finger protein 799</fullName>
    </recommendedName>
    <alternativeName>
        <fullName>Zinc finger protein 842</fullName>
    </alternativeName>
</protein>
<comment type="function">
    <text>May be involved in transcriptional regulation.</text>
</comment>
<comment type="subcellular location">
    <subcellularLocation>
        <location evidence="4">Nucleus</location>
    </subcellularLocation>
</comment>
<comment type="alternative products">
    <event type="alternative splicing"/>
    <isoform>
        <id>Q96GE5-1</id>
        <name>1</name>
        <sequence type="displayed"/>
    </isoform>
    <isoform>
        <id>Q96GE5-2</id>
        <name>2</name>
        <sequence type="described" ref="VSP_039164"/>
    </isoform>
</comment>
<comment type="similarity">
    <text evidence="4">Belongs to the krueppel C2H2-type zinc-finger protein family.</text>
</comment>
<reference key="1">
    <citation type="journal article" date="2007" name="BMC Genomics">
        <title>The full-ORF clone resource of the German cDNA consortium.</title>
        <authorList>
            <person name="Bechtel S."/>
            <person name="Rosenfelder H."/>
            <person name="Duda A."/>
            <person name="Schmidt C.P."/>
            <person name="Ernst U."/>
            <person name="Wellenreuther R."/>
            <person name="Mehrle A."/>
            <person name="Schuster C."/>
            <person name="Bahr A."/>
            <person name="Bloecker H."/>
            <person name="Heubner D."/>
            <person name="Hoerlein A."/>
            <person name="Michel G."/>
            <person name="Wedler H."/>
            <person name="Koehrer K."/>
            <person name="Ottenwaelder B."/>
            <person name="Poustka A."/>
            <person name="Wiemann S."/>
            <person name="Schupp I."/>
        </authorList>
    </citation>
    <scope>NUCLEOTIDE SEQUENCE [LARGE SCALE MRNA] (ISOFORM 2)</scope>
    <source>
        <tissue>Lymph</tissue>
    </source>
</reference>
<reference key="2">
    <citation type="journal article" date="2004" name="Nature">
        <title>The DNA sequence and biology of human chromosome 19.</title>
        <authorList>
            <person name="Grimwood J."/>
            <person name="Gordon L.A."/>
            <person name="Olsen A.S."/>
            <person name="Terry A."/>
            <person name="Schmutz J."/>
            <person name="Lamerdin J.E."/>
            <person name="Hellsten U."/>
            <person name="Goodstein D."/>
            <person name="Couronne O."/>
            <person name="Tran-Gyamfi M."/>
            <person name="Aerts A."/>
            <person name="Altherr M."/>
            <person name="Ashworth L."/>
            <person name="Bajorek E."/>
            <person name="Black S."/>
            <person name="Branscomb E."/>
            <person name="Caenepeel S."/>
            <person name="Carrano A.V."/>
            <person name="Caoile C."/>
            <person name="Chan Y.M."/>
            <person name="Christensen M."/>
            <person name="Cleland C.A."/>
            <person name="Copeland A."/>
            <person name="Dalin E."/>
            <person name="Dehal P."/>
            <person name="Denys M."/>
            <person name="Detter J.C."/>
            <person name="Escobar J."/>
            <person name="Flowers D."/>
            <person name="Fotopulos D."/>
            <person name="Garcia C."/>
            <person name="Georgescu A.M."/>
            <person name="Glavina T."/>
            <person name="Gomez M."/>
            <person name="Gonzales E."/>
            <person name="Groza M."/>
            <person name="Hammon N."/>
            <person name="Hawkins T."/>
            <person name="Haydu L."/>
            <person name="Ho I."/>
            <person name="Huang W."/>
            <person name="Israni S."/>
            <person name="Jett J."/>
            <person name="Kadner K."/>
            <person name="Kimball H."/>
            <person name="Kobayashi A."/>
            <person name="Larionov V."/>
            <person name="Leem S.-H."/>
            <person name="Lopez F."/>
            <person name="Lou Y."/>
            <person name="Lowry S."/>
            <person name="Malfatti S."/>
            <person name="Martinez D."/>
            <person name="McCready P.M."/>
            <person name="Medina C."/>
            <person name="Morgan J."/>
            <person name="Nelson K."/>
            <person name="Nolan M."/>
            <person name="Ovcharenko I."/>
            <person name="Pitluck S."/>
            <person name="Pollard M."/>
            <person name="Popkie A.P."/>
            <person name="Predki P."/>
            <person name="Quan G."/>
            <person name="Ramirez L."/>
            <person name="Rash S."/>
            <person name="Retterer J."/>
            <person name="Rodriguez A."/>
            <person name="Rogers S."/>
            <person name="Salamov A."/>
            <person name="Salazar A."/>
            <person name="She X."/>
            <person name="Smith D."/>
            <person name="Slezak T."/>
            <person name="Solovyev V."/>
            <person name="Thayer N."/>
            <person name="Tice H."/>
            <person name="Tsai M."/>
            <person name="Ustaszewska A."/>
            <person name="Vo N."/>
            <person name="Wagner M."/>
            <person name="Wheeler J."/>
            <person name="Wu K."/>
            <person name="Xie G."/>
            <person name="Yang J."/>
            <person name="Dubchak I."/>
            <person name="Furey T.S."/>
            <person name="DeJong P."/>
            <person name="Dickson M."/>
            <person name="Gordon D."/>
            <person name="Eichler E.E."/>
            <person name="Pennacchio L.A."/>
            <person name="Richardson P."/>
            <person name="Stubbs L."/>
            <person name="Rokhsar D.S."/>
            <person name="Myers R.M."/>
            <person name="Rubin E.M."/>
            <person name="Lucas S.M."/>
        </authorList>
    </citation>
    <scope>NUCLEOTIDE SEQUENCE [LARGE SCALE GENOMIC DNA]</scope>
</reference>
<reference key="3">
    <citation type="journal article" date="2004" name="Genome Res.">
        <title>The status, quality, and expansion of the NIH full-length cDNA project: the Mammalian Gene Collection (MGC).</title>
        <authorList>
            <consortium name="The MGC Project Team"/>
        </authorList>
    </citation>
    <scope>NUCLEOTIDE SEQUENCE [LARGE SCALE MRNA] OF 277-643 (ISOFORM 1/2)</scope>
    <source>
        <tissue>Uterus</tissue>
    </source>
</reference>
<gene>
    <name type="primary">ZNF799</name>
    <name type="synonym">ZNF842</name>
</gene>
<feature type="chain" id="PRO_0000271017" description="Zinc finger protein 799">
    <location>
        <begin position="1"/>
        <end position="643"/>
    </location>
</feature>
<feature type="domain" description="KRAB" evidence="2">
    <location>
        <begin position="4"/>
        <end position="86"/>
    </location>
</feature>
<feature type="zinc finger region" description="C2H2-type 1; degenerate" evidence="1">
    <location>
        <begin position="134"/>
        <end position="163"/>
    </location>
</feature>
<feature type="zinc finger region" description="C2H2-type 2; degenerate" evidence="1">
    <location>
        <begin position="169"/>
        <end position="191"/>
    </location>
</feature>
<feature type="zinc finger region" description="C2H2-type 3" evidence="1">
    <location>
        <begin position="197"/>
        <end position="219"/>
    </location>
</feature>
<feature type="zinc finger region" description="C2H2-type 4" evidence="1">
    <location>
        <begin position="225"/>
        <end position="247"/>
    </location>
</feature>
<feature type="zinc finger region" description="C2H2-type 5" evidence="1">
    <location>
        <begin position="253"/>
        <end position="275"/>
    </location>
</feature>
<feature type="zinc finger region" description="C2H2-type 6" evidence="1">
    <location>
        <begin position="281"/>
        <end position="303"/>
    </location>
</feature>
<feature type="zinc finger region" description="C2H2-type 7" evidence="1">
    <location>
        <begin position="309"/>
        <end position="331"/>
    </location>
</feature>
<feature type="zinc finger region" description="C2H2-type 8" evidence="1">
    <location>
        <begin position="337"/>
        <end position="359"/>
    </location>
</feature>
<feature type="zinc finger region" description="C2H2-type 9" evidence="1">
    <location>
        <begin position="365"/>
        <end position="387"/>
    </location>
</feature>
<feature type="zinc finger region" description="C2H2-type 10" evidence="1">
    <location>
        <begin position="393"/>
        <end position="415"/>
    </location>
</feature>
<feature type="zinc finger region" description="C2H2-type 11" evidence="1">
    <location>
        <begin position="421"/>
        <end position="443"/>
    </location>
</feature>
<feature type="zinc finger region" description="C2H2-type 12" evidence="1">
    <location>
        <begin position="449"/>
        <end position="470"/>
    </location>
</feature>
<feature type="zinc finger region" description="C2H2-type 13" evidence="1">
    <location>
        <begin position="476"/>
        <end position="498"/>
    </location>
</feature>
<feature type="zinc finger region" description="C2H2-type 14" evidence="1">
    <location>
        <begin position="504"/>
        <end position="526"/>
    </location>
</feature>
<feature type="zinc finger region" description="C2H2-type 15" evidence="1">
    <location>
        <begin position="532"/>
        <end position="554"/>
    </location>
</feature>
<feature type="zinc finger region" description="C2H2-type 16" evidence="1">
    <location>
        <begin position="560"/>
        <end position="582"/>
    </location>
</feature>
<feature type="zinc finger region" description="C2H2-type 17" evidence="1">
    <location>
        <begin position="588"/>
        <end position="615"/>
    </location>
</feature>
<feature type="zinc finger region" description="C2H2-type 18" evidence="1">
    <location>
        <begin position="621"/>
        <end position="643"/>
    </location>
</feature>
<feature type="splice variant" id="VSP_039164" description="In isoform 2." evidence="3">
    <original>M</original>
    <variation>MDQ</variation>
    <location>
        <position position="1"/>
    </location>
</feature>
<feature type="sequence variant" id="VAR_029846" description="In dbSNP:rs1134387.">
    <original>G</original>
    <variation>V</variation>
    <location>
        <position position="44"/>
    </location>
</feature>
<feature type="sequence variant" id="VAR_029847" description="In dbSNP:rs8112445.">
    <original>C</original>
    <variation>R</variation>
    <location>
        <position position="593"/>
    </location>
</feature>
<feature type="sequence conflict" description="In Ref. 1; AL832890." evidence="4" ref="1">
    <original>L</original>
    <variation>P</variation>
    <location>
        <position position="252"/>
    </location>
</feature>